<keyword id="KW-0446">Lipid-binding</keyword>
<keyword id="KW-1185">Reference proteome</keyword>
<keyword id="KW-0813">Transport</keyword>
<name>PITP4_DICDI</name>
<evidence type="ECO:0000250" key="1"/>
<evidence type="ECO:0000305" key="2"/>
<feature type="chain" id="PRO_0000328409" description="Phosphatidylinositol transfer protein 4">
    <location>
        <begin position="1"/>
        <end position="331"/>
    </location>
</feature>
<gene>
    <name type="primary">pitD</name>
    <name type="ORF">DDB_G0292426</name>
</gene>
<comment type="function">
    <text evidence="1">Catalyzes the transfer of PtdIns and phosphatidylcholine between membranes.</text>
</comment>
<comment type="similarity">
    <text evidence="2">Belongs to the PtdIns transfer protein family. PI transfer class IIA subfamily.</text>
</comment>
<proteinExistence type="inferred from homology"/>
<dbReference type="EMBL" id="AAFI02000190">
    <property type="protein sequence ID" value="EAL61192.2"/>
    <property type="molecule type" value="Genomic_DNA"/>
</dbReference>
<dbReference type="RefSeq" id="XP_629603.2">
    <property type="nucleotide sequence ID" value="XM_629601.2"/>
</dbReference>
<dbReference type="SMR" id="Q54D93"/>
<dbReference type="FunCoup" id="Q54D93">
    <property type="interactions" value="61"/>
</dbReference>
<dbReference type="STRING" id="44689.Q54D93"/>
<dbReference type="PaxDb" id="44689-DDB0237592"/>
<dbReference type="EnsemblProtists" id="EAL61192">
    <property type="protein sequence ID" value="EAL61192"/>
    <property type="gene ID" value="DDB_G0292426"/>
</dbReference>
<dbReference type="GeneID" id="8628663"/>
<dbReference type="KEGG" id="ddi:DDB_G0292426"/>
<dbReference type="dictyBase" id="DDB_G0292426">
    <property type="gene designation" value="pitD"/>
</dbReference>
<dbReference type="VEuPathDB" id="AmoebaDB:DDB_G0292426"/>
<dbReference type="eggNOG" id="KOG3668">
    <property type="taxonomic scope" value="Eukaryota"/>
</dbReference>
<dbReference type="HOGENOM" id="CLU_046509_2_0_1"/>
<dbReference type="InParanoid" id="Q54D93"/>
<dbReference type="OMA" id="KFHRQVF"/>
<dbReference type="PhylomeDB" id="Q54D93"/>
<dbReference type="PRO" id="PR:Q54D93"/>
<dbReference type="Proteomes" id="UP000002195">
    <property type="component" value="Chromosome 6"/>
</dbReference>
<dbReference type="GO" id="GO:0005737">
    <property type="term" value="C:cytoplasm"/>
    <property type="evidence" value="ECO:0000318"/>
    <property type="project" value="GO_Central"/>
</dbReference>
<dbReference type="GO" id="GO:0031210">
    <property type="term" value="F:phosphatidylcholine binding"/>
    <property type="evidence" value="ECO:0000318"/>
    <property type="project" value="GO_Central"/>
</dbReference>
<dbReference type="GO" id="GO:0008525">
    <property type="term" value="F:phosphatidylcholine transporter activity"/>
    <property type="evidence" value="ECO:0000318"/>
    <property type="project" value="GO_Central"/>
</dbReference>
<dbReference type="GO" id="GO:0035091">
    <property type="term" value="F:phosphatidylinositol binding"/>
    <property type="evidence" value="ECO:0000318"/>
    <property type="project" value="GO_Central"/>
</dbReference>
<dbReference type="GO" id="GO:0008526">
    <property type="term" value="F:phosphatidylinositol transfer activity"/>
    <property type="evidence" value="ECO:0000318"/>
    <property type="project" value="GO_Central"/>
</dbReference>
<dbReference type="CDD" id="cd07815">
    <property type="entry name" value="SRPBCC_PITP"/>
    <property type="match status" value="1"/>
</dbReference>
<dbReference type="FunFam" id="3.30.530.20:FF:000028">
    <property type="entry name" value="Phosphatidylinositol transfer protein 5"/>
    <property type="match status" value="1"/>
</dbReference>
<dbReference type="Gene3D" id="3.30.530.20">
    <property type="match status" value="1"/>
</dbReference>
<dbReference type="InterPro" id="IPR001666">
    <property type="entry name" value="PI_transfer"/>
</dbReference>
<dbReference type="InterPro" id="IPR055261">
    <property type="entry name" value="PI_transfer_N"/>
</dbReference>
<dbReference type="InterPro" id="IPR023393">
    <property type="entry name" value="START-like_dom_sf"/>
</dbReference>
<dbReference type="PANTHER" id="PTHR10658">
    <property type="entry name" value="PHOSPHATIDYLINOSITOL TRANSFER PROTEIN"/>
    <property type="match status" value="1"/>
</dbReference>
<dbReference type="PANTHER" id="PTHR10658:SF38">
    <property type="entry name" value="PHOSPHATIDYLINOSITOL TRANSFER PROTEIN 4"/>
    <property type="match status" value="1"/>
</dbReference>
<dbReference type="Pfam" id="PF02121">
    <property type="entry name" value="IP_trans"/>
    <property type="match status" value="1"/>
</dbReference>
<dbReference type="PRINTS" id="PR00391">
    <property type="entry name" value="PITRANSFER"/>
</dbReference>
<dbReference type="SUPFAM" id="SSF55961">
    <property type="entry name" value="Bet v1-like"/>
    <property type="match status" value="1"/>
</dbReference>
<sequence>MLIKEYRITLPFTKEEYRLGQKYMTARKTHESSNAGDNVQLLEKSSFTDKNGVKGTFTHKVFLLKKSLPRYASAILPKSALKIEEKSWNSYPNTKTIYSCPFFGEKFYLCIESIHKDGRDEEENVFGLSKDILKKRIVDHVDIARDEVEGKDVKTDEDPRMFKSKLTGRGPLTSPNWRKEVNPAMVVYKLVTVNFNYWGFQNRVENLVQTNGLREVFLKAHRSLFCWMDEWIDLSEEQIEQFEQSTYQLMMNNTIENKLNEDIKNMNISEKKGNQQNTYSKGDFKCPNVNCQHVCSECKHMLMTTTTTTTKTVTETTTTVQSPICYRNMVC</sequence>
<organism>
    <name type="scientific">Dictyostelium discoideum</name>
    <name type="common">Social amoeba</name>
    <dbReference type="NCBI Taxonomy" id="44689"/>
    <lineage>
        <taxon>Eukaryota</taxon>
        <taxon>Amoebozoa</taxon>
        <taxon>Evosea</taxon>
        <taxon>Eumycetozoa</taxon>
        <taxon>Dictyostelia</taxon>
        <taxon>Dictyosteliales</taxon>
        <taxon>Dictyosteliaceae</taxon>
        <taxon>Dictyostelium</taxon>
    </lineage>
</organism>
<protein>
    <recommendedName>
        <fullName>Phosphatidylinositol transfer protein 4</fullName>
        <shortName>PtdIns transfer protein 4</shortName>
    </recommendedName>
    <alternativeName>
        <fullName>DdPITP4</fullName>
    </alternativeName>
</protein>
<accession>Q54D93</accession>
<reference key="1">
    <citation type="journal article" date="2005" name="Nature">
        <title>The genome of the social amoeba Dictyostelium discoideum.</title>
        <authorList>
            <person name="Eichinger L."/>
            <person name="Pachebat J.A."/>
            <person name="Gloeckner G."/>
            <person name="Rajandream M.A."/>
            <person name="Sucgang R."/>
            <person name="Berriman M."/>
            <person name="Song J."/>
            <person name="Olsen R."/>
            <person name="Szafranski K."/>
            <person name="Xu Q."/>
            <person name="Tunggal B."/>
            <person name="Kummerfeld S."/>
            <person name="Madera M."/>
            <person name="Konfortov B.A."/>
            <person name="Rivero F."/>
            <person name="Bankier A.T."/>
            <person name="Lehmann R."/>
            <person name="Hamlin N."/>
            <person name="Davies R."/>
            <person name="Gaudet P."/>
            <person name="Fey P."/>
            <person name="Pilcher K."/>
            <person name="Chen G."/>
            <person name="Saunders D."/>
            <person name="Sodergren E.J."/>
            <person name="Davis P."/>
            <person name="Kerhornou A."/>
            <person name="Nie X."/>
            <person name="Hall N."/>
            <person name="Anjard C."/>
            <person name="Hemphill L."/>
            <person name="Bason N."/>
            <person name="Farbrother P."/>
            <person name="Desany B."/>
            <person name="Just E."/>
            <person name="Morio T."/>
            <person name="Rost R."/>
            <person name="Churcher C.M."/>
            <person name="Cooper J."/>
            <person name="Haydock S."/>
            <person name="van Driessche N."/>
            <person name="Cronin A."/>
            <person name="Goodhead I."/>
            <person name="Muzny D.M."/>
            <person name="Mourier T."/>
            <person name="Pain A."/>
            <person name="Lu M."/>
            <person name="Harper D."/>
            <person name="Lindsay R."/>
            <person name="Hauser H."/>
            <person name="James K.D."/>
            <person name="Quiles M."/>
            <person name="Madan Babu M."/>
            <person name="Saito T."/>
            <person name="Buchrieser C."/>
            <person name="Wardroper A."/>
            <person name="Felder M."/>
            <person name="Thangavelu M."/>
            <person name="Johnson D."/>
            <person name="Knights A."/>
            <person name="Loulseged H."/>
            <person name="Mungall K.L."/>
            <person name="Oliver K."/>
            <person name="Price C."/>
            <person name="Quail M.A."/>
            <person name="Urushihara H."/>
            <person name="Hernandez J."/>
            <person name="Rabbinowitsch E."/>
            <person name="Steffen D."/>
            <person name="Sanders M."/>
            <person name="Ma J."/>
            <person name="Kohara Y."/>
            <person name="Sharp S."/>
            <person name="Simmonds M.N."/>
            <person name="Spiegler S."/>
            <person name="Tivey A."/>
            <person name="Sugano S."/>
            <person name="White B."/>
            <person name="Walker D."/>
            <person name="Woodward J.R."/>
            <person name="Winckler T."/>
            <person name="Tanaka Y."/>
            <person name="Shaulsky G."/>
            <person name="Schleicher M."/>
            <person name="Weinstock G.M."/>
            <person name="Rosenthal A."/>
            <person name="Cox E.C."/>
            <person name="Chisholm R.L."/>
            <person name="Gibbs R.A."/>
            <person name="Loomis W.F."/>
            <person name="Platzer M."/>
            <person name="Kay R.R."/>
            <person name="Williams J.G."/>
            <person name="Dear P.H."/>
            <person name="Noegel A.A."/>
            <person name="Barrell B.G."/>
            <person name="Kuspa A."/>
        </authorList>
    </citation>
    <scope>NUCLEOTIDE SEQUENCE [LARGE SCALE GENOMIC DNA]</scope>
    <source>
        <strain>AX4</strain>
    </source>
</reference>